<reference key="1">
    <citation type="submission" date="2003-01" db="EMBL/GenBank/DDBJ databases">
        <title>Chloroplast DNA phylogeny of tribe Heliantheae (Asteraceae).</title>
        <authorList>
            <person name="Panero J.L."/>
            <person name="Baldwin B.G."/>
            <person name="Schilling E.E."/>
            <person name="Clevinger J.A."/>
        </authorList>
    </citation>
    <scope>NUCLEOTIDE SEQUENCE [GENOMIC DNA]</scope>
</reference>
<accession>Q8HVS8</accession>
<sequence length="166" mass="19475">MFPMVTEFMNYGQQTVRAARYIGQGFMITLSHANRLPVTIQYPYEKLITSERFRGRIHFEFDKCIACEVCVRVCPIDLPVVDWKLETDIRKKRLLNYSIDFGICIFCGNCVEYCPTNCLSMTEEYELSTYDRHELNYNQIALGRLPMSIIDDYTIRTILNLPEIKT</sequence>
<organism>
    <name type="scientific">Constancea nevinii</name>
    <name type="common">Nevin's woolly sunflower</name>
    <name type="synonym">Eriophyllum nevinii</name>
    <dbReference type="NCBI Taxonomy" id="149418"/>
    <lineage>
        <taxon>Eukaryota</taxon>
        <taxon>Viridiplantae</taxon>
        <taxon>Streptophyta</taxon>
        <taxon>Embryophyta</taxon>
        <taxon>Tracheophyta</taxon>
        <taxon>Spermatophyta</taxon>
        <taxon>Magnoliopsida</taxon>
        <taxon>eudicotyledons</taxon>
        <taxon>Gunneridae</taxon>
        <taxon>Pentapetalae</taxon>
        <taxon>asterids</taxon>
        <taxon>campanulids</taxon>
        <taxon>Asterales</taxon>
        <taxon>Asteraceae</taxon>
        <taxon>Asteroideae</taxon>
        <taxon>Heliantheae alliance</taxon>
        <taxon>Madieae</taxon>
        <taxon>Baeriinae</taxon>
        <taxon>Constancea</taxon>
    </lineage>
</organism>
<keyword id="KW-0004">4Fe-4S</keyword>
<keyword id="KW-0150">Chloroplast</keyword>
<keyword id="KW-0408">Iron</keyword>
<keyword id="KW-0411">Iron-sulfur</keyword>
<keyword id="KW-0472">Membrane</keyword>
<keyword id="KW-0479">Metal-binding</keyword>
<keyword id="KW-0520">NAD</keyword>
<keyword id="KW-0521">NADP</keyword>
<keyword id="KW-0934">Plastid</keyword>
<keyword id="KW-0618">Plastoquinone</keyword>
<keyword id="KW-0874">Quinone</keyword>
<keyword id="KW-0677">Repeat</keyword>
<keyword id="KW-0793">Thylakoid</keyword>
<keyword id="KW-1278">Translocase</keyword>
<protein>
    <recommendedName>
        <fullName evidence="1">NAD(P)H-quinone oxidoreductase subunit I, chloroplastic</fullName>
        <ecNumber evidence="1">7.1.1.-</ecNumber>
    </recommendedName>
    <alternativeName>
        <fullName evidence="1">NAD(P)H dehydrogenase subunit I</fullName>
        <shortName evidence="1">NDH subunit I</shortName>
    </alternativeName>
    <alternativeName>
        <fullName evidence="1">NADH-plastoquinone oxidoreductase subunit I</fullName>
    </alternativeName>
</protein>
<comment type="function">
    <text evidence="1">NDH shuttles electrons from NAD(P)H:plastoquinone, via FMN and iron-sulfur (Fe-S) centers, to quinones in the photosynthetic chain and possibly in a chloroplast respiratory chain. The immediate electron acceptor for the enzyme in this species is believed to be plastoquinone. Couples the redox reaction to proton translocation, and thus conserves the redox energy in a proton gradient.</text>
</comment>
<comment type="catalytic activity">
    <reaction evidence="1">
        <text>a plastoquinone + NADH + (n+1) H(+)(in) = a plastoquinol + NAD(+) + n H(+)(out)</text>
        <dbReference type="Rhea" id="RHEA:42608"/>
        <dbReference type="Rhea" id="RHEA-COMP:9561"/>
        <dbReference type="Rhea" id="RHEA-COMP:9562"/>
        <dbReference type="ChEBI" id="CHEBI:15378"/>
        <dbReference type="ChEBI" id="CHEBI:17757"/>
        <dbReference type="ChEBI" id="CHEBI:57540"/>
        <dbReference type="ChEBI" id="CHEBI:57945"/>
        <dbReference type="ChEBI" id="CHEBI:62192"/>
    </reaction>
</comment>
<comment type="catalytic activity">
    <reaction evidence="1">
        <text>a plastoquinone + NADPH + (n+1) H(+)(in) = a plastoquinol + NADP(+) + n H(+)(out)</text>
        <dbReference type="Rhea" id="RHEA:42612"/>
        <dbReference type="Rhea" id="RHEA-COMP:9561"/>
        <dbReference type="Rhea" id="RHEA-COMP:9562"/>
        <dbReference type="ChEBI" id="CHEBI:15378"/>
        <dbReference type="ChEBI" id="CHEBI:17757"/>
        <dbReference type="ChEBI" id="CHEBI:57783"/>
        <dbReference type="ChEBI" id="CHEBI:58349"/>
        <dbReference type="ChEBI" id="CHEBI:62192"/>
    </reaction>
</comment>
<comment type="cofactor">
    <cofactor evidence="1">
        <name>[4Fe-4S] cluster</name>
        <dbReference type="ChEBI" id="CHEBI:49883"/>
    </cofactor>
    <text evidence="1">Binds 2 [4Fe-4S] clusters per subunit.</text>
</comment>
<comment type="subunit">
    <text evidence="1">NDH is composed of at least 16 different subunits, 5 of which are encoded in the nucleus.</text>
</comment>
<comment type="subcellular location">
    <subcellularLocation>
        <location evidence="1">Plastid</location>
        <location evidence="1">Chloroplast thylakoid membrane</location>
        <topology evidence="1">Peripheral membrane protein</topology>
    </subcellularLocation>
</comment>
<comment type="similarity">
    <text evidence="1">Belongs to the complex I 23 kDa subunit family.</text>
</comment>
<dbReference type="EC" id="7.1.1.-" evidence="1"/>
<dbReference type="EMBL" id="AF383785">
    <property type="protein sequence ID" value="AAN61726.1"/>
    <property type="molecule type" value="Genomic_DNA"/>
</dbReference>
<dbReference type="SMR" id="Q8HVS8"/>
<dbReference type="GO" id="GO:0009535">
    <property type="term" value="C:chloroplast thylakoid membrane"/>
    <property type="evidence" value="ECO:0007669"/>
    <property type="project" value="UniProtKB-SubCell"/>
</dbReference>
<dbReference type="GO" id="GO:0051539">
    <property type="term" value="F:4 iron, 4 sulfur cluster binding"/>
    <property type="evidence" value="ECO:0007669"/>
    <property type="project" value="UniProtKB-KW"/>
</dbReference>
<dbReference type="GO" id="GO:0005506">
    <property type="term" value="F:iron ion binding"/>
    <property type="evidence" value="ECO:0007669"/>
    <property type="project" value="UniProtKB-UniRule"/>
</dbReference>
<dbReference type="GO" id="GO:0008137">
    <property type="term" value="F:NADH dehydrogenase (ubiquinone) activity"/>
    <property type="evidence" value="ECO:0007669"/>
    <property type="project" value="InterPro"/>
</dbReference>
<dbReference type="GO" id="GO:0048038">
    <property type="term" value="F:quinone binding"/>
    <property type="evidence" value="ECO:0007669"/>
    <property type="project" value="UniProtKB-KW"/>
</dbReference>
<dbReference type="GO" id="GO:0019684">
    <property type="term" value="P:photosynthesis, light reaction"/>
    <property type="evidence" value="ECO:0007669"/>
    <property type="project" value="UniProtKB-UniRule"/>
</dbReference>
<dbReference type="FunFam" id="3.30.70.3270:FF:000006">
    <property type="entry name" value="NAD(P)H-quinone oxidoreductase subunit I, chloroplastic"/>
    <property type="match status" value="1"/>
</dbReference>
<dbReference type="Gene3D" id="3.30.70.3270">
    <property type="match status" value="1"/>
</dbReference>
<dbReference type="HAMAP" id="MF_01351">
    <property type="entry name" value="NDH1_NuoI"/>
    <property type="match status" value="1"/>
</dbReference>
<dbReference type="InterPro" id="IPR017896">
    <property type="entry name" value="4Fe4S_Fe-S-bd"/>
</dbReference>
<dbReference type="InterPro" id="IPR017900">
    <property type="entry name" value="4Fe4S_Fe_S_CS"/>
</dbReference>
<dbReference type="InterPro" id="IPR010226">
    <property type="entry name" value="NADH_quinone_OxRdtase_chainI"/>
</dbReference>
<dbReference type="InterPro" id="IPR004497">
    <property type="entry name" value="NDHI"/>
</dbReference>
<dbReference type="NCBIfam" id="TIGR00403">
    <property type="entry name" value="ndhI"/>
    <property type="match status" value="1"/>
</dbReference>
<dbReference type="NCBIfam" id="TIGR01971">
    <property type="entry name" value="NuoI"/>
    <property type="match status" value="1"/>
</dbReference>
<dbReference type="NCBIfam" id="NF004537">
    <property type="entry name" value="PRK05888.1-3"/>
    <property type="match status" value="1"/>
</dbReference>
<dbReference type="PANTHER" id="PTHR47275">
    <property type="entry name" value="NAD(P)H-QUINONE OXIDOREDUCTASE SUBUNIT I, CHLOROPLASTIC"/>
    <property type="match status" value="1"/>
</dbReference>
<dbReference type="PANTHER" id="PTHR47275:SF1">
    <property type="entry name" value="NAD(P)H-QUINONE OXIDOREDUCTASE SUBUNIT I, CHLOROPLASTIC"/>
    <property type="match status" value="1"/>
</dbReference>
<dbReference type="Pfam" id="PF00037">
    <property type="entry name" value="Fer4"/>
    <property type="match status" value="2"/>
</dbReference>
<dbReference type="SUPFAM" id="SSF54862">
    <property type="entry name" value="4Fe-4S ferredoxins"/>
    <property type="match status" value="1"/>
</dbReference>
<dbReference type="PROSITE" id="PS00198">
    <property type="entry name" value="4FE4S_FER_1"/>
    <property type="match status" value="2"/>
</dbReference>
<dbReference type="PROSITE" id="PS51379">
    <property type="entry name" value="4FE4S_FER_2"/>
    <property type="match status" value="2"/>
</dbReference>
<feature type="chain" id="PRO_0000250770" description="NAD(P)H-quinone oxidoreductase subunit I, chloroplastic">
    <location>
        <begin position="1"/>
        <end position="166"/>
    </location>
</feature>
<feature type="domain" description="4Fe-4S ferredoxin-type 1" evidence="1">
    <location>
        <begin position="55"/>
        <end position="84"/>
    </location>
</feature>
<feature type="domain" description="4Fe-4S ferredoxin-type 2" evidence="1">
    <location>
        <begin position="95"/>
        <end position="124"/>
    </location>
</feature>
<feature type="binding site" evidence="1">
    <location>
        <position position="64"/>
    </location>
    <ligand>
        <name>[4Fe-4S] cluster</name>
        <dbReference type="ChEBI" id="CHEBI:49883"/>
        <label>1</label>
    </ligand>
</feature>
<feature type="binding site" evidence="1">
    <location>
        <position position="67"/>
    </location>
    <ligand>
        <name>[4Fe-4S] cluster</name>
        <dbReference type="ChEBI" id="CHEBI:49883"/>
        <label>1</label>
    </ligand>
</feature>
<feature type="binding site" evidence="1">
    <location>
        <position position="70"/>
    </location>
    <ligand>
        <name>[4Fe-4S] cluster</name>
        <dbReference type="ChEBI" id="CHEBI:49883"/>
        <label>1</label>
    </ligand>
</feature>
<feature type="binding site" evidence="1">
    <location>
        <position position="74"/>
    </location>
    <ligand>
        <name>[4Fe-4S] cluster</name>
        <dbReference type="ChEBI" id="CHEBI:49883"/>
        <label>2</label>
    </ligand>
</feature>
<feature type="binding site" evidence="1">
    <location>
        <position position="104"/>
    </location>
    <ligand>
        <name>[4Fe-4S] cluster</name>
        <dbReference type="ChEBI" id="CHEBI:49883"/>
        <label>2</label>
    </ligand>
</feature>
<feature type="binding site" evidence="1">
    <location>
        <position position="107"/>
    </location>
    <ligand>
        <name>[4Fe-4S] cluster</name>
        <dbReference type="ChEBI" id="CHEBI:49883"/>
        <label>2</label>
    </ligand>
</feature>
<feature type="binding site" evidence="1">
    <location>
        <position position="110"/>
    </location>
    <ligand>
        <name>[4Fe-4S] cluster</name>
        <dbReference type="ChEBI" id="CHEBI:49883"/>
        <label>2</label>
    </ligand>
</feature>
<feature type="binding site" evidence="1">
    <location>
        <position position="114"/>
    </location>
    <ligand>
        <name>[4Fe-4S] cluster</name>
        <dbReference type="ChEBI" id="CHEBI:49883"/>
        <label>1</label>
    </ligand>
</feature>
<proteinExistence type="inferred from homology"/>
<evidence type="ECO:0000255" key="1">
    <source>
        <dbReference type="HAMAP-Rule" id="MF_01351"/>
    </source>
</evidence>
<name>NDHI_CONNE</name>
<gene>
    <name evidence="1" type="primary">ndhI</name>
</gene>
<geneLocation type="chloroplast"/>